<dbReference type="EC" id="3.1.26.4" evidence="1"/>
<dbReference type="EMBL" id="CT573213">
    <property type="protein sequence ID" value="CAJ64419.1"/>
    <property type="molecule type" value="Genomic_DNA"/>
</dbReference>
<dbReference type="RefSeq" id="WP_011606859.1">
    <property type="nucleotide sequence ID" value="NC_008278.1"/>
</dbReference>
<dbReference type="SMR" id="Q0RDP7"/>
<dbReference type="STRING" id="326424.FRAAL5787"/>
<dbReference type="KEGG" id="fal:FRAAL5787"/>
<dbReference type="eggNOG" id="COG0164">
    <property type="taxonomic scope" value="Bacteria"/>
</dbReference>
<dbReference type="HOGENOM" id="CLU_036532_1_0_11"/>
<dbReference type="OrthoDB" id="9803420at2"/>
<dbReference type="Proteomes" id="UP000000657">
    <property type="component" value="Chromosome"/>
</dbReference>
<dbReference type="GO" id="GO:0005737">
    <property type="term" value="C:cytoplasm"/>
    <property type="evidence" value="ECO:0007669"/>
    <property type="project" value="UniProtKB-SubCell"/>
</dbReference>
<dbReference type="GO" id="GO:0032299">
    <property type="term" value="C:ribonuclease H2 complex"/>
    <property type="evidence" value="ECO:0007669"/>
    <property type="project" value="TreeGrafter"/>
</dbReference>
<dbReference type="GO" id="GO:0030145">
    <property type="term" value="F:manganese ion binding"/>
    <property type="evidence" value="ECO:0007669"/>
    <property type="project" value="UniProtKB-UniRule"/>
</dbReference>
<dbReference type="GO" id="GO:0003723">
    <property type="term" value="F:RNA binding"/>
    <property type="evidence" value="ECO:0007669"/>
    <property type="project" value="InterPro"/>
</dbReference>
<dbReference type="GO" id="GO:0004523">
    <property type="term" value="F:RNA-DNA hybrid ribonuclease activity"/>
    <property type="evidence" value="ECO:0007669"/>
    <property type="project" value="UniProtKB-UniRule"/>
</dbReference>
<dbReference type="GO" id="GO:0043137">
    <property type="term" value="P:DNA replication, removal of RNA primer"/>
    <property type="evidence" value="ECO:0007669"/>
    <property type="project" value="TreeGrafter"/>
</dbReference>
<dbReference type="GO" id="GO:0006298">
    <property type="term" value="P:mismatch repair"/>
    <property type="evidence" value="ECO:0007669"/>
    <property type="project" value="TreeGrafter"/>
</dbReference>
<dbReference type="CDD" id="cd07182">
    <property type="entry name" value="RNase_HII_bacteria_HII_like"/>
    <property type="match status" value="1"/>
</dbReference>
<dbReference type="Gene3D" id="3.30.420.10">
    <property type="entry name" value="Ribonuclease H-like superfamily/Ribonuclease H"/>
    <property type="match status" value="1"/>
</dbReference>
<dbReference type="HAMAP" id="MF_00052_B">
    <property type="entry name" value="RNase_HII_B"/>
    <property type="match status" value="1"/>
</dbReference>
<dbReference type="InterPro" id="IPR022898">
    <property type="entry name" value="RNase_HII"/>
</dbReference>
<dbReference type="InterPro" id="IPR001352">
    <property type="entry name" value="RNase_HII/HIII"/>
</dbReference>
<dbReference type="InterPro" id="IPR024567">
    <property type="entry name" value="RNase_HII/HIII_dom"/>
</dbReference>
<dbReference type="InterPro" id="IPR012337">
    <property type="entry name" value="RNaseH-like_sf"/>
</dbReference>
<dbReference type="InterPro" id="IPR036397">
    <property type="entry name" value="RNaseH_sf"/>
</dbReference>
<dbReference type="NCBIfam" id="NF000595">
    <property type="entry name" value="PRK00015.1-3"/>
    <property type="match status" value="1"/>
</dbReference>
<dbReference type="NCBIfam" id="NF000598">
    <property type="entry name" value="PRK00015.2-2"/>
    <property type="match status" value="1"/>
</dbReference>
<dbReference type="PANTHER" id="PTHR10954">
    <property type="entry name" value="RIBONUCLEASE H2 SUBUNIT A"/>
    <property type="match status" value="1"/>
</dbReference>
<dbReference type="PANTHER" id="PTHR10954:SF18">
    <property type="entry name" value="RIBONUCLEASE HII"/>
    <property type="match status" value="1"/>
</dbReference>
<dbReference type="Pfam" id="PF01351">
    <property type="entry name" value="RNase_HII"/>
    <property type="match status" value="1"/>
</dbReference>
<dbReference type="SUPFAM" id="SSF53098">
    <property type="entry name" value="Ribonuclease H-like"/>
    <property type="match status" value="1"/>
</dbReference>
<dbReference type="PROSITE" id="PS51975">
    <property type="entry name" value="RNASE_H_2"/>
    <property type="match status" value="1"/>
</dbReference>
<accession>Q0RDP7</accession>
<keyword id="KW-0963">Cytoplasm</keyword>
<keyword id="KW-0255">Endonuclease</keyword>
<keyword id="KW-0378">Hydrolase</keyword>
<keyword id="KW-0464">Manganese</keyword>
<keyword id="KW-0479">Metal-binding</keyword>
<keyword id="KW-0540">Nuclease</keyword>
<keyword id="KW-1185">Reference proteome</keyword>
<name>RNH2_FRAAA</name>
<reference key="1">
    <citation type="journal article" date="2007" name="Genome Res.">
        <title>Genome characteristics of facultatively symbiotic Frankia sp. strains reflect host range and host plant biogeography.</title>
        <authorList>
            <person name="Normand P."/>
            <person name="Lapierre P."/>
            <person name="Tisa L.S."/>
            <person name="Gogarten J.P."/>
            <person name="Alloisio N."/>
            <person name="Bagnarol E."/>
            <person name="Bassi C.A."/>
            <person name="Berry A.M."/>
            <person name="Bickhart D.M."/>
            <person name="Choisne N."/>
            <person name="Couloux A."/>
            <person name="Cournoyer B."/>
            <person name="Cruveiller S."/>
            <person name="Daubin V."/>
            <person name="Demange N."/>
            <person name="Francino M.P."/>
            <person name="Goltsman E."/>
            <person name="Huang Y."/>
            <person name="Kopp O.R."/>
            <person name="Labarre L."/>
            <person name="Lapidus A."/>
            <person name="Lavire C."/>
            <person name="Marechal J."/>
            <person name="Martinez M."/>
            <person name="Mastronunzio J.E."/>
            <person name="Mullin B.C."/>
            <person name="Niemann J."/>
            <person name="Pujic P."/>
            <person name="Rawnsley T."/>
            <person name="Rouy Z."/>
            <person name="Schenowitz C."/>
            <person name="Sellstedt A."/>
            <person name="Tavares F."/>
            <person name="Tomkins J.P."/>
            <person name="Vallenet D."/>
            <person name="Valverde C."/>
            <person name="Wall L.G."/>
            <person name="Wang Y."/>
            <person name="Medigue C."/>
            <person name="Benson D.R."/>
        </authorList>
    </citation>
    <scope>NUCLEOTIDE SEQUENCE [LARGE SCALE GENOMIC DNA]</scope>
    <source>
        <strain>DSM 45986 / CECT 9034 / ACN14a</strain>
    </source>
</reference>
<gene>
    <name evidence="1" type="primary">rnhB</name>
    <name type="ordered locus">FRAAL5787</name>
</gene>
<sequence length="241" mass="25698">MRPRGVVIRRDAGLFGYERALVRCGLGPVAGVDEAGRGACAGPLVVAAVVLGPDGRRRLSPRLADSKLLTEQVREGLFDEVLRAAADWSAVVIPAAEIDRTGVHVANITGMRRAVARLGHRPGYVLTDGFAVAGFGTESLAVVKGDRVAACIAAASIVAKVTRDRIMRALHTRYAEYDFAQHKGYVTAAHAAALARYGPCDEHRKSYVNVAAHAVPTREARSLRLEDRVLATSLHGVTETA</sequence>
<protein>
    <recommendedName>
        <fullName evidence="1">Ribonuclease HII</fullName>
        <shortName evidence="1">RNase HII</shortName>
        <ecNumber evidence="1">3.1.26.4</ecNumber>
    </recommendedName>
</protein>
<proteinExistence type="inferred from homology"/>
<organism>
    <name type="scientific">Frankia alni (strain DSM 45986 / CECT 9034 / ACN14a)</name>
    <dbReference type="NCBI Taxonomy" id="326424"/>
    <lineage>
        <taxon>Bacteria</taxon>
        <taxon>Bacillati</taxon>
        <taxon>Actinomycetota</taxon>
        <taxon>Actinomycetes</taxon>
        <taxon>Frankiales</taxon>
        <taxon>Frankiaceae</taxon>
        <taxon>Frankia</taxon>
    </lineage>
</organism>
<feature type="chain" id="PRO_0000334898" description="Ribonuclease HII">
    <location>
        <begin position="1"/>
        <end position="241"/>
    </location>
</feature>
<feature type="domain" description="RNase H type-2" evidence="2">
    <location>
        <begin position="27"/>
        <end position="227"/>
    </location>
</feature>
<feature type="binding site" evidence="1">
    <location>
        <position position="33"/>
    </location>
    <ligand>
        <name>a divalent metal cation</name>
        <dbReference type="ChEBI" id="CHEBI:60240"/>
    </ligand>
</feature>
<feature type="binding site" evidence="1">
    <location>
        <position position="34"/>
    </location>
    <ligand>
        <name>a divalent metal cation</name>
        <dbReference type="ChEBI" id="CHEBI:60240"/>
    </ligand>
</feature>
<feature type="binding site" evidence="1">
    <location>
        <position position="128"/>
    </location>
    <ligand>
        <name>a divalent metal cation</name>
        <dbReference type="ChEBI" id="CHEBI:60240"/>
    </ligand>
</feature>
<comment type="function">
    <text evidence="1">Endonuclease that specifically degrades the RNA of RNA-DNA hybrids.</text>
</comment>
<comment type="catalytic activity">
    <reaction evidence="1">
        <text>Endonucleolytic cleavage to 5'-phosphomonoester.</text>
        <dbReference type="EC" id="3.1.26.4"/>
    </reaction>
</comment>
<comment type="cofactor">
    <cofactor evidence="1">
        <name>Mn(2+)</name>
        <dbReference type="ChEBI" id="CHEBI:29035"/>
    </cofactor>
    <cofactor evidence="1">
        <name>Mg(2+)</name>
        <dbReference type="ChEBI" id="CHEBI:18420"/>
    </cofactor>
    <text evidence="1">Manganese or magnesium. Binds 1 divalent metal ion per monomer in the absence of substrate. May bind a second metal ion after substrate binding.</text>
</comment>
<comment type="subcellular location">
    <subcellularLocation>
        <location evidence="1">Cytoplasm</location>
    </subcellularLocation>
</comment>
<comment type="similarity">
    <text evidence="1">Belongs to the RNase HII family.</text>
</comment>
<evidence type="ECO:0000255" key="1">
    <source>
        <dbReference type="HAMAP-Rule" id="MF_00052"/>
    </source>
</evidence>
<evidence type="ECO:0000255" key="2">
    <source>
        <dbReference type="PROSITE-ProRule" id="PRU01319"/>
    </source>
</evidence>